<organism>
    <name type="scientific">Oryctolagus cuniculus</name>
    <name type="common">Rabbit</name>
    <dbReference type="NCBI Taxonomy" id="9986"/>
    <lineage>
        <taxon>Eukaryota</taxon>
        <taxon>Metazoa</taxon>
        <taxon>Chordata</taxon>
        <taxon>Craniata</taxon>
        <taxon>Vertebrata</taxon>
        <taxon>Euteleostomi</taxon>
        <taxon>Mammalia</taxon>
        <taxon>Eutheria</taxon>
        <taxon>Euarchontoglires</taxon>
        <taxon>Glires</taxon>
        <taxon>Lagomorpha</taxon>
        <taxon>Leporidae</taxon>
        <taxon>Oryctolagus</taxon>
    </lineage>
</organism>
<keyword id="KW-0903">Direct protein sequencing</keyword>
<keyword id="KW-0256">Endoplasmic reticulum</keyword>
<keyword id="KW-0349">Heme</keyword>
<keyword id="KW-0408">Iron</keyword>
<keyword id="KW-0472">Membrane</keyword>
<keyword id="KW-0479">Metal-binding</keyword>
<keyword id="KW-0492">Microsome</keyword>
<keyword id="KW-0503">Monooxygenase</keyword>
<keyword id="KW-0560">Oxidoreductase</keyword>
<keyword id="KW-1185">Reference proteome</keyword>
<accession>P00182</accession>
<accession>Q29509</accession>
<accession>Q29525</accession>
<comment type="function">
    <text>Cytochromes P450 are a group of heme-thiolate monooxygenases. In liver microsomes, this enzyme is involved in an NADPH-dependent electron transport pathway. It oxidizes a variety of structurally unrelated compounds, including steroids, fatty acids, and xenobiotics.</text>
</comment>
<comment type="catalytic activity">
    <reaction>
        <text>an organic molecule + reduced [NADPH--hemoprotein reductase] + O2 = an alcohol + oxidized [NADPH--hemoprotein reductase] + H2O + H(+)</text>
        <dbReference type="Rhea" id="RHEA:17149"/>
        <dbReference type="Rhea" id="RHEA-COMP:11964"/>
        <dbReference type="Rhea" id="RHEA-COMP:11965"/>
        <dbReference type="ChEBI" id="CHEBI:15377"/>
        <dbReference type="ChEBI" id="CHEBI:15378"/>
        <dbReference type="ChEBI" id="CHEBI:15379"/>
        <dbReference type="ChEBI" id="CHEBI:30879"/>
        <dbReference type="ChEBI" id="CHEBI:57618"/>
        <dbReference type="ChEBI" id="CHEBI:58210"/>
        <dbReference type="ChEBI" id="CHEBI:142491"/>
        <dbReference type="EC" id="1.14.14.1"/>
    </reaction>
</comment>
<comment type="cofactor">
    <cofactor evidence="1">
        <name>heme</name>
        <dbReference type="ChEBI" id="CHEBI:30413"/>
    </cofactor>
</comment>
<comment type="subcellular location">
    <subcellularLocation>
        <location>Endoplasmic reticulum membrane</location>
        <topology>Peripheral membrane protein</topology>
    </subcellularLocation>
    <subcellularLocation>
        <location>Microsome membrane</location>
        <topology>Peripheral membrane protein</topology>
    </subcellularLocation>
</comment>
<comment type="induction">
    <text>Constitutively expressed.</text>
</comment>
<comment type="similarity">
    <text evidence="2">Belongs to the cytochrome P450 family.</text>
</comment>
<gene>
    <name type="primary">CYP2C3</name>
</gene>
<feature type="chain" id="PRO_0000051694" description="Cytochrome P450 2C3">
    <location>
        <begin position="1"/>
        <end position="489"/>
    </location>
</feature>
<feature type="binding site" description="axial binding residue">
    <location>
        <position position="434"/>
    </location>
    <ligand>
        <name>heme</name>
        <dbReference type="ChEBI" id="CHEBI:30413"/>
    </ligand>
    <ligandPart>
        <name>Fe</name>
        <dbReference type="ChEBI" id="CHEBI:18248"/>
    </ligandPart>
</feature>
<feature type="sequence conflict" description="In Ref. 3; AAA31175 and 4; BAA05139." evidence="2" ref="3 4">
    <original>D</original>
    <variation>N</variation>
    <location>
        <position position="49"/>
    </location>
</feature>
<feature type="sequence conflict" description="In Ref. 3; AAA31175 and 4; BAA05139." evidence="2" ref="3 4">
    <original>GVI</original>
    <variation>TVK</variation>
    <location>
        <begin position="82"/>
        <end position="84"/>
    </location>
</feature>
<feature type="sequence conflict" description="In Ref. 1; AA sequence." evidence="2" ref="1">
    <original>D</original>
    <variation>Y</variation>
    <location>
        <position position="89"/>
    </location>
</feature>
<feature type="sequence conflict" description="In Ref. 4; BAA05139." evidence="2" ref="4">
    <original>I</original>
    <variation>M</variation>
    <location>
        <position position="178"/>
    </location>
</feature>
<feature type="sequence conflict" description="In Ref. 1; AA sequence." evidence="2" ref="1">
    <original>L</original>
    <variation>LG</variation>
    <location>
        <position position="222"/>
    </location>
</feature>
<feature type="sequence conflict" description="In Ref. 3; AAA31175." evidence="2" ref="3">
    <original>S</original>
    <variation>L</variation>
    <location>
        <position position="256"/>
    </location>
</feature>
<feature type="sequence conflict" description="In Ref. 1; AA sequence." evidence="2" ref="1">
    <original>M</original>
    <variation>S</variation>
    <location>
        <position position="338"/>
    </location>
</feature>
<feature type="sequence conflict" description="In Ref. 1; AA sequence." evidence="2" ref="1">
    <original>T</original>
    <variation>S</variation>
    <location>
        <position position="342"/>
    </location>
</feature>
<feature type="sequence conflict" description="In Ref. 4; BAA05139." evidence="2" ref="4">
    <original>S</original>
    <variation>T</variation>
    <location>
        <position position="364"/>
    </location>
</feature>
<feature type="sequence conflict" description="In Ref. 1; AA sequence." evidence="2" ref="1">
    <original>A</original>
    <variation>T</variation>
    <location>
        <position position="429"/>
    </location>
</feature>
<feature type="sequence conflict" description="In Ref. 4; BAA05139." evidence="2" ref="4">
    <original>V</original>
    <variation>L</variation>
    <location>
        <position position="471"/>
    </location>
</feature>
<dbReference type="EC" id="1.14.14.1"/>
<dbReference type="EMBL" id="K01523">
    <property type="protein sequence ID" value="AAA31212.1"/>
    <property type="molecule type" value="mRNA"/>
</dbReference>
<dbReference type="EMBL" id="M31254">
    <property type="protein sequence ID" value="AAA31175.1"/>
    <property type="molecule type" value="Genomic_DNA"/>
</dbReference>
<dbReference type="EMBL" id="M31245">
    <property type="protein sequence ID" value="AAA31175.1"/>
    <property type="status" value="JOINED"/>
    <property type="molecule type" value="Genomic_DNA"/>
</dbReference>
<dbReference type="EMBL" id="M31247">
    <property type="protein sequence ID" value="AAA31175.1"/>
    <property type="status" value="JOINED"/>
    <property type="molecule type" value="Genomic_DNA"/>
</dbReference>
<dbReference type="EMBL" id="M31248">
    <property type="protein sequence ID" value="AAA31175.1"/>
    <property type="status" value="JOINED"/>
    <property type="molecule type" value="Genomic_DNA"/>
</dbReference>
<dbReference type="EMBL" id="M31249">
    <property type="protein sequence ID" value="AAA31175.1"/>
    <property type="status" value="JOINED"/>
    <property type="molecule type" value="Genomic_DNA"/>
</dbReference>
<dbReference type="EMBL" id="M31250">
    <property type="protein sequence ID" value="AAA31175.1"/>
    <property type="status" value="JOINED"/>
    <property type="molecule type" value="Genomic_DNA"/>
</dbReference>
<dbReference type="EMBL" id="M31251">
    <property type="protein sequence ID" value="AAA31175.1"/>
    <property type="status" value="JOINED"/>
    <property type="molecule type" value="Genomic_DNA"/>
</dbReference>
<dbReference type="EMBL" id="M31252">
    <property type="protein sequence ID" value="AAA31175.1"/>
    <property type="status" value="JOINED"/>
    <property type="molecule type" value="Genomic_DNA"/>
</dbReference>
<dbReference type="EMBL" id="M31253">
    <property type="protein sequence ID" value="AAA31175.1"/>
    <property type="status" value="JOINED"/>
    <property type="molecule type" value="Genomic_DNA"/>
</dbReference>
<dbReference type="EMBL" id="D26152">
    <property type="protein sequence ID" value="BAA05139.1"/>
    <property type="molecule type" value="mRNA"/>
</dbReference>
<dbReference type="PIR" id="A00183">
    <property type="entry name" value="O4RBP3"/>
</dbReference>
<dbReference type="RefSeq" id="NP_001164736.1">
    <property type="nucleotide sequence ID" value="NM_001171265.1"/>
</dbReference>
<dbReference type="SMR" id="P00182"/>
<dbReference type="PaxDb" id="9986-ENSOCUP00000023608"/>
<dbReference type="GeneID" id="100328933"/>
<dbReference type="KEGG" id="ocu:100328933"/>
<dbReference type="CTD" id="100328933"/>
<dbReference type="eggNOG" id="KOG0156">
    <property type="taxonomic scope" value="Eukaryota"/>
</dbReference>
<dbReference type="InParanoid" id="P00182"/>
<dbReference type="OrthoDB" id="1103324at2759"/>
<dbReference type="Proteomes" id="UP000001811">
    <property type="component" value="Unplaced"/>
</dbReference>
<dbReference type="GO" id="GO:0005789">
    <property type="term" value="C:endoplasmic reticulum membrane"/>
    <property type="evidence" value="ECO:0007669"/>
    <property type="project" value="UniProtKB-SubCell"/>
</dbReference>
<dbReference type="GO" id="GO:0020037">
    <property type="term" value="F:heme binding"/>
    <property type="evidence" value="ECO:0007669"/>
    <property type="project" value="InterPro"/>
</dbReference>
<dbReference type="GO" id="GO:0005506">
    <property type="term" value="F:iron ion binding"/>
    <property type="evidence" value="ECO:0007669"/>
    <property type="project" value="InterPro"/>
</dbReference>
<dbReference type="GO" id="GO:0016712">
    <property type="term" value="F:oxidoreductase activity, acting on paired donors, with incorporation or reduction of molecular oxygen, reduced flavin or flavoprotein as one donor, and incorporation of one atom of oxygen"/>
    <property type="evidence" value="ECO:0007669"/>
    <property type="project" value="UniProtKB-EC"/>
</dbReference>
<dbReference type="GO" id="GO:0006082">
    <property type="term" value="P:organic acid metabolic process"/>
    <property type="evidence" value="ECO:0007669"/>
    <property type="project" value="TreeGrafter"/>
</dbReference>
<dbReference type="GO" id="GO:0006805">
    <property type="term" value="P:xenobiotic metabolic process"/>
    <property type="evidence" value="ECO:0007669"/>
    <property type="project" value="TreeGrafter"/>
</dbReference>
<dbReference type="CDD" id="cd20665">
    <property type="entry name" value="CYP2C-like"/>
    <property type="match status" value="1"/>
</dbReference>
<dbReference type="FunFam" id="1.10.630.10:FF:000299">
    <property type="entry name" value="Cytochrome P450 2C9"/>
    <property type="match status" value="1"/>
</dbReference>
<dbReference type="Gene3D" id="1.10.630.10">
    <property type="entry name" value="Cytochrome P450"/>
    <property type="match status" value="1"/>
</dbReference>
<dbReference type="InterPro" id="IPR001128">
    <property type="entry name" value="Cyt_P450"/>
</dbReference>
<dbReference type="InterPro" id="IPR017972">
    <property type="entry name" value="Cyt_P450_CS"/>
</dbReference>
<dbReference type="InterPro" id="IPR002401">
    <property type="entry name" value="Cyt_P450_E_grp-I"/>
</dbReference>
<dbReference type="InterPro" id="IPR036396">
    <property type="entry name" value="Cyt_P450_sf"/>
</dbReference>
<dbReference type="InterPro" id="IPR050182">
    <property type="entry name" value="Cytochrome_P450_fam2"/>
</dbReference>
<dbReference type="PANTHER" id="PTHR24300:SF200">
    <property type="entry name" value="CYTOCHROME P450 2C70"/>
    <property type="match status" value="1"/>
</dbReference>
<dbReference type="PANTHER" id="PTHR24300">
    <property type="entry name" value="CYTOCHROME P450 508A4-RELATED"/>
    <property type="match status" value="1"/>
</dbReference>
<dbReference type="Pfam" id="PF00067">
    <property type="entry name" value="p450"/>
    <property type="match status" value="1"/>
</dbReference>
<dbReference type="PRINTS" id="PR00463">
    <property type="entry name" value="EP450I"/>
</dbReference>
<dbReference type="PRINTS" id="PR00385">
    <property type="entry name" value="P450"/>
</dbReference>
<dbReference type="SUPFAM" id="SSF48264">
    <property type="entry name" value="Cytochrome P450"/>
    <property type="match status" value="1"/>
</dbReference>
<dbReference type="PROSITE" id="PS00086">
    <property type="entry name" value="CYTOCHROME_P450"/>
    <property type="match status" value="1"/>
</dbReference>
<proteinExistence type="evidence at protein level"/>
<protein>
    <recommendedName>
        <fullName>Cytochrome P450 2C3</fullName>
        <ecNumber>1.14.14.1</ecNumber>
    </recommendedName>
    <alternativeName>
        <fullName>CYPIIC3</fullName>
    </alternativeName>
    <alternativeName>
        <fullName>Cytochrome P450 PBc3</fullName>
    </alternativeName>
    <alternativeName>
        <fullName>Cytochrome P450 form 3B</fullName>
    </alternativeName>
</protein>
<sequence>MDLLIILGICLSCVVLLSLWKKTHGKGKLPPGPTPLPVVGNLLQLETKDINKSLSMLAKEYGSIFTLYFGMKPAVVLYGYEGVIEALIDRGEEFSGRGIFPVFDRVTKGLGIVFSSGEKWKETRRFSLTVLRNLGMGKKTIEERIQEEALCLIQALRKTNASPCDPTFLLFCVPCNVICSVIFQNRFDYDDEKFKTLIKYFHENFELLGTPWIQLYNIFPILHYLPGSHRQLFKNIDGQIKFILEKVQEHQESLDSNNPRDFVDHFLIKMEKEKHKKQSEFTMDNLITTIWDVFSAGTDTTSNTLKFALLLLLKHPEITAKVQEEIEHVIGRHRSPCMQDRTRMPYTDAVMHEIQRYVDLVPTSLPHAVTQDIEFNGYLIPKGTDIIPSLTSVLYDDKEFPNPEKFDPGHFLDESGNFKKSDYFMPFSAGKRACVGEGLARMELFLLLTTILQHFTLKPLVDPKDIDPTPVENGFVSVPPSYELCFVPV</sequence>
<name>CP2C3_RABIT</name>
<evidence type="ECO:0000250" key="1"/>
<evidence type="ECO:0000305" key="2"/>
<reference key="1">
    <citation type="journal article" date="1985" name="J. Biol. Chem.">
        <title>The complete amino acid sequence of a constitutive form of liver microsomal cytochrome P-450.</title>
        <authorList>
            <person name="Ozols J."/>
            <person name="Heinemann F.S."/>
            <person name="Johnson E.F."/>
        </authorList>
    </citation>
    <scope>PROTEIN SEQUENCE</scope>
</reference>
<reference key="2">
    <citation type="journal article" date="1984" name="Biochemistry">
        <title>Isolation and sequence analysis of three cloned cDNAs for rabbit liver proteins that are related to rabbit cytochrome P-450 (form 2), the major phenobarbital-inducible form.</title>
        <authorList>
            <person name="Leighton J.K."/>
            <person name="Debrunner-Vossbrinck B.A."/>
            <person name="Kemper B."/>
        </authorList>
    </citation>
    <scope>NUCLEOTIDE SEQUENCE [MRNA]</scope>
</reference>
<reference key="3">
    <citation type="journal article" date="1990" name="Biochemistry">
        <title>Structure of the rabbit cytochrome P450IIC3 gene, a constitutive member of the P450IIC subfamily.</title>
        <authorList>
            <person name="Chan G."/>
        </authorList>
    </citation>
    <scope>NUCLEOTIDE SEQUENCE [GENOMIC DNA]</scope>
</reference>
<reference key="4">
    <citation type="submission" date="1994-01" db="EMBL/GenBank/DDBJ databases">
        <title>A member of cytochrome P450 2C family which is identical to rabbit P450pc3.</title>
        <authorList>
            <person name="Noshiro M."/>
            <person name="Ishida H."/>
            <person name="Okuda K."/>
        </authorList>
    </citation>
    <scope>NUCLEOTIDE SEQUENCE [MRNA]</scope>
    <source>
        <strain>New Zealand white</strain>
        <tissue>Liver</tissue>
    </source>
</reference>